<name>RL7A_AERPE</name>
<organism>
    <name type="scientific">Aeropyrum pernix (strain ATCC 700893 / DSM 11879 / JCM 9820 / NBRC 100138 / K1)</name>
    <dbReference type="NCBI Taxonomy" id="272557"/>
    <lineage>
        <taxon>Archaea</taxon>
        <taxon>Thermoproteota</taxon>
        <taxon>Thermoprotei</taxon>
        <taxon>Desulfurococcales</taxon>
        <taxon>Desulfurococcaceae</taxon>
        <taxon>Aeropyrum</taxon>
    </lineage>
</organism>
<feature type="chain" id="PRO_0000136788" description="Large ribosomal subunit protein eL8">
    <location>
        <begin position="1"/>
        <end position="127"/>
    </location>
</feature>
<feature type="helix" evidence="3">
    <location>
        <begin position="13"/>
        <end position="29"/>
    </location>
</feature>
<feature type="strand" evidence="3">
    <location>
        <begin position="30"/>
        <end position="35"/>
    </location>
</feature>
<feature type="helix" evidence="3">
    <location>
        <begin position="36"/>
        <end position="44"/>
    </location>
</feature>
<feature type="strand" evidence="3">
    <location>
        <begin position="49"/>
        <end position="54"/>
    </location>
</feature>
<feature type="helix" evidence="3">
    <location>
        <begin position="60"/>
        <end position="62"/>
    </location>
</feature>
<feature type="turn" evidence="3">
    <location>
        <begin position="63"/>
        <end position="65"/>
    </location>
</feature>
<feature type="helix" evidence="3">
    <location>
        <begin position="66"/>
        <end position="72"/>
    </location>
</feature>
<feature type="strand" evidence="3">
    <location>
        <begin position="77"/>
        <end position="81"/>
    </location>
</feature>
<feature type="helix" evidence="3">
    <location>
        <begin position="83"/>
        <end position="89"/>
    </location>
</feature>
<feature type="strand" evidence="3">
    <location>
        <begin position="97"/>
        <end position="103"/>
    </location>
</feature>
<feature type="helix" evidence="3">
    <location>
        <begin position="105"/>
        <end position="107"/>
    </location>
</feature>
<feature type="helix" evidence="3">
    <location>
        <begin position="108"/>
        <end position="125"/>
    </location>
</feature>
<protein>
    <recommendedName>
        <fullName evidence="1">Large ribosomal subunit protein eL8</fullName>
    </recommendedName>
    <alternativeName>
        <fullName evidence="2">50S ribosomal protein L7Ae</fullName>
    </alternativeName>
    <alternativeName>
        <fullName evidence="1">Ribosomal protein L8e</fullName>
    </alternativeName>
</protein>
<comment type="function">
    <text evidence="1">Multifunctional RNA-binding protein that recognizes the K-turn motif in ribosomal RNA, the RNA component of RNase P, box H/ACA, box C/D and box C'/D' sRNAs.</text>
</comment>
<comment type="subunit">
    <text evidence="1">Part of the 50S ribosomal subunit. Probably part of the RNase P complex.</text>
</comment>
<comment type="subcellular location">
    <subcellularLocation>
        <location evidence="1">Cytoplasm</location>
    </subcellularLocation>
</comment>
<comment type="similarity">
    <text evidence="1">Belongs to the eukaryotic ribosomal protein eL8 family.</text>
</comment>
<evidence type="ECO:0000255" key="1">
    <source>
        <dbReference type="HAMAP-Rule" id="MF_00326"/>
    </source>
</evidence>
<evidence type="ECO:0000305" key="2"/>
<evidence type="ECO:0007829" key="3">
    <source>
        <dbReference type="PDB" id="2FC3"/>
    </source>
</evidence>
<gene>
    <name evidence="1" type="primary">rpl7ae</name>
    <name type="ordered locus">APE_1818</name>
</gene>
<sequence>MSKPIYVRFEVPEDLAEKAYEAVKRARETGRIKKGTNETTKAVERGLAKLVVIAEDVDPPEIVMHLPLLCDEKKIPYVYVPSKKRLGEAAGIEVAAASVAIIEPGDAETLVREIVEKVKELRAKAGV</sequence>
<dbReference type="EMBL" id="BA000002">
    <property type="protein sequence ID" value="BAA80821.1"/>
    <property type="molecule type" value="Genomic_DNA"/>
</dbReference>
<dbReference type="PIR" id="H72566">
    <property type="entry name" value="H72566"/>
</dbReference>
<dbReference type="RefSeq" id="WP_010866613.1">
    <property type="nucleotide sequence ID" value="NC_000854.2"/>
</dbReference>
<dbReference type="PDB" id="2FC3">
    <property type="method" value="X-ray"/>
    <property type="resolution" value="1.56 A"/>
    <property type="chains" value="A=4-127"/>
</dbReference>
<dbReference type="PDBsum" id="2FC3"/>
<dbReference type="SMR" id="Q9YAX7"/>
<dbReference type="STRING" id="272557.APE_1818"/>
<dbReference type="EnsemblBacteria" id="BAA80821">
    <property type="protein sequence ID" value="BAA80821"/>
    <property type="gene ID" value="APE_1818"/>
</dbReference>
<dbReference type="GeneID" id="1446261"/>
<dbReference type="KEGG" id="ape:APE_1818"/>
<dbReference type="PATRIC" id="fig|272557.25.peg.1219"/>
<dbReference type="eggNOG" id="arCOG01751">
    <property type="taxonomic scope" value="Archaea"/>
</dbReference>
<dbReference type="EvolutionaryTrace" id="Q9YAX7"/>
<dbReference type="Proteomes" id="UP000002518">
    <property type="component" value="Chromosome"/>
</dbReference>
<dbReference type="GO" id="GO:0005737">
    <property type="term" value="C:cytoplasm"/>
    <property type="evidence" value="ECO:0007669"/>
    <property type="project" value="UniProtKB-SubCell"/>
</dbReference>
<dbReference type="GO" id="GO:1990904">
    <property type="term" value="C:ribonucleoprotein complex"/>
    <property type="evidence" value="ECO:0007669"/>
    <property type="project" value="UniProtKB-KW"/>
</dbReference>
<dbReference type="GO" id="GO:0005840">
    <property type="term" value="C:ribosome"/>
    <property type="evidence" value="ECO:0007669"/>
    <property type="project" value="UniProtKB-KW"/>
</dbReference>
<dbReference type="GO" id="GO:0004526">
    <property type="term" value="F:ribonuclease P activity"/>
    <property type="evidence" value="ECO:0007669"/>
    <property type="project" value="UniProtKB-UniRule"/>
</dbReference>
<dbReference type="GO" id="GO:0019843">
    <property type="term" value="F:rRNA binding"/>
    <property type="evidence" value="ECO:0007669"/>
    <property type="project" value="UniProtKB-KW"/>
</dbReference>
<dbReference type="GO" id="GO:0003735">
    <property type="term" value="F:structural constituent of ribosome"/>
    <property type="evidence" value="ECO:0007669"/>
    <property type="project" value="InterPro"/>
</dbReference>
<dbReference type="GO" id="GO:0042254">
    <property type="term" value="P:ribosome biogenesis"/>
    <property type="evidence" value="ECO:0007669"/>
    <property type="project" value="InterPro"/>
</dbReference>
<dbReference type="GO" id="GO:0006412">
    <property type="term" value="P:translation"/>
    <property type="evidence" value="ECO:0007669"/>
    <property type="project" value="UniProtKB-UniRule"/>
</dbReference>
<dbReference type="GO" id="GO:0001682">
    <property type="term" value="P:tRNA 5'-leader removal"/>
    <property type="evidence" value="ECO:0007669"/>
    <property type="project" value="UniProtKB-UniRule"/>
</dbReference>
<dbReference type="FunFam" id="3.30.1330.30:FF:000020">
    <property type="entry name" value="50S ribosomal protein L7Ae"/>
    <property type="match status" value="1"/>
</dbReference>
<dbReference type="Gene3D" id="3.30.1330.30">
    <property type="match status" value="1"/>
</dbReference>
<dbReference type="HAMAP" id="MF_00326">
    <property type="entry name" value="Ribosomal_eL8"/>
    <property type="match status" value="1"/>
</dbReference>
<dbReference type="InterPro" id="IPR050257">
    <property type="entry name" value="eL8/uL1-like"/>
</dbReference>
<dbReference type="InterPro" id="IPR029064">
    <property type="entry name" value="Ribosomal_eL30-like_sf"/>
</dbReference>
<dbReference type="InterPro" id="IPR004037">
    <property type="entry name" value="Ribosomal_eL8-like_CS"/>
</dbReference>
<dbReference type="InterPro" id="IPR004038">
    <property type="entry name" value="Ribosomal_eL8/eL30/eS12/Gad45"/>
</dbReference>
<dbReference type="InterPro" id="IPR018492">
    <property type="entry name" value="Ribosomal_eL8/Nhp2"/>
</dbReference>
<dbReference type="InterPro" id="IPR022481">
    <property type="entry name" value="Ribosomal_eL8_arc"/>
</dbReference>
<dbReference type="NCBIfam" id="TIGR03677">
    <property type="entry name" value="eL8_ribo"/>
    <property type="match status" value="1"/>
</dbReference>
<dbReference type="PANTHER" id="PTHR23105">
    <property type="entry name" value="RIBOSOMAL PROTEIN L7AE FAMILY MEMBER"/>
    <property type="match status" value="1"/>
</dbReference>
<dbReference type="Pfam" id="PF01248">
    <property type="entry name" value="Ribosomal_L7Ae"/>
    <property type="match status" value="1"/>
</dbReference>
<dbReference type="PRINTS" id="PR00881">
    <property type="entry name" value="L7ARS6FAMILY"/>
</dbReference>
<dbReference type="PRINTS" id="PR00884">
    <property type="entry name" value="RIBOSOMALHS6"/>
</dbReference>
<dbReference type="SUPFAM" id="SSF55315">
    <property type="entry name" value="L30e-like"/>
    <property type="match status" value="1"/>
</dbReference>
<dbReference type="PROSITE" id="PS01082">
    <property type="entry name" value="RIBOSOMAL_L7AE"/>
    <property type="match status" value="1"/>
</dbReference>
<reference key="1">
    <citation type="journal article" date="1999" name="DNA Res.">
        <title>Complete genome sequence of an aerobic hyper-thermophilic crenarchaeon, Aeropyrum pernix K1.</title>
        <authorList>
            <person name="Kawarabayasi Y."/>
            <person name="Hino Y."/>
            <person name="Horikawa H."/>
            <person name="Yamazaki S."/>
            <person name="Haikawa Y."/>
            <person name="Jin-no K."/>
            <person name="Takahashi M."/>
            <person name="Sekine M."/>
            <person name="Baba S."/>
            <person name="Ankai A."/>
            <person name="Kosugi H."/>
            <person name="Hosoyama A."/>
            <person name="Fukui S."/>
            <person name="Nagai Y."/>
            <person name="Nishijima K."/>
            <person name="Nakazawa H."/>
            <person name="Takamiya M."/>
            <person name="Masuda S."/>
            <person name="Funahashi T."/>
            <person name="Tanaka T."/>
            <person name="Kudoh Y."/>
            <person name="Yamazaki J."/>
            <person name="Kushida N."/>
            <person name="Oguchi A."/>
            <person name="Aoki K."/>
            <person name="Kubota K."/>
            <person name="Nakamura Y."/>
            <person name="Nomura N."/>
            <person name="Sako Y."/>
            <person name="Kikuchi H."/>
        </authorList>
    </citation>
    <scope>NUCLEOTIDE SEQUENCE [LARGE SCALE GENOMIC DNA]</scope>
    <source>
        <strain>ATCC 700893 / DSM 11879 / JCM 9820 / NBRC 100138 / K1</strain>
    </source>
</reference>
<reference key="2">
    <citation type="journal article" date="2013" name="Acta Crystallogr. F">
        <title>Structure of the Aeropyrum pernix L7Ae multifunctional protein and insight into its extreme thermostability.</title>
        <authorList>
            <person name="Bhuiya M.W."/>
            <person name="Suryadi J."/>
            <person name="Zhou Z."/>
            <person name="Brown B.A. II"/>
        </authorList>
    </citation>
    <scope>X-RAY CRYSTALLOGRAPHY (1.56 ANGSTROMS) OF 4-127</scope>
</reference>
<proteinExistence type="evidence at protein level"/>
<keyword id="KW-0002">3D-structure</keyword>
<keyword id="KW-0963">Cytoplasm</keyword>
<keyword id="KW-1185">Reference proteome</keyword>
<keyword id="KW-0687">Ribonucleoprotein</keyword>
<keyword id="KW-0689">Ribosomal protein</keyword>
<keyword id="KW-0694">RNA-binding</keyword>
<keyword id="KW-0699">rRNA-binding</keyword>
<keyword id="KW-0819">tRNA processing</keyword>
<accession>Q9YAX7</accession>